<reference key="1">
    <citation type="journal article" date="1995" name="Plant Physiol.">
        <title>Nucleotide sequence of a cDNA clone encoding a thaumatin-like protein from Arabidopsis.</title>
        <authorList>
            <person name="Hu X."/>
            <person name="Reddy A.S.N."/>
        </authorList>
    </citation>
    <scope>NUCLEOTIDE SEQUENCE [MRNA]</scope>
    <source>
        <tissue>Flower meristem</tissue>
    </source>
</reference>
<reference key="2">
    <citation type="journal article" date="2000" name="Nature">
        <title>Sequence and analysis of chromosome 1 of the plant Arabidopsis thaliana.</title>
        <authorList>
            <person name="Theologis A."/>
            <person name="Ecker J.R."/>
            <person name="Palm C.J."/>
            <person name="Federspiel N.A."/>
            <person name="Kaul S."/>
            <person name="White O."/>
            <person name="Alonso J."/>
            <person name="Altafi H."/>
            <person name="Araujo R."/>
            <person name="Bowman C.L."/>
            <person name="Brooks S.Y."/>
            <person name="Buehler E."/>
            <person name="Chan A."/>
            <person name="Chao Q."/>
            <person name="Chen H."/>
            <person name="Cheuk R.F."/>
            <person name="Chin C.W."/>
            <person name="Chung M.K."/>
            <person name="Conn L."/>
            <person name="Conway A.B."/>
            <person name="Conway A.R."/>
            <person name="Creasy T.H."/>
            <person name="Dewar K."/>
            <person name="Dunn P."/>
            <person name="Etgu P."/>
            <person name="Feldblyum T.V."/>
            <person name="Feng J.-D."/>
            <person name="Fong B."/>
            <person name="Fujii C.Y."/>
            <person name="Gill J.E."/>
            <person name="Goldsmith A.D."/>
            <person name="Haas B."/>
            <person name="Hansen N.F."/>
            <person name="Hughes B."/>
            <person name="Huizar L."/>
            <person name="Hunter J.L."/>
            <person name="Jenkins J."/>
            <person name="Johnson-Hopson C."/>
            <person name="Khan S."/>
            <person name="Khaykin E."/>
            <person name="Kim C.J."/>
            <person name="Koo H.L."/>
            <person name="Kremenetskaia I."/>
            <person name="Kurtz D.B."/>
            <person name="Kwan A."/>
            <person name="Lam B."/>
            <person name="Langin-Hooper S."/>
            <person name="Lee A."/>
            <person name="Lee J.M."/>
            <person name="Lenz C.A."/>
            <person name="Li J.H."/>
            <person name="Li Y.-P."/>
            <person name="Lin X."/>
            <person name="Liu S.X."/>
            <person name="Liu Z.A."/>
            <person name="Luros J.S."/>
            <person name="Maiti R."/>
            <person name="Marziali A."/>
            <person name="Militscher J."/>
            <person name="Miranda M."/>
            <person name="Nguyen M."/>
            <person name="Nierman W.C."/>
            <person name="Osborne B.I."/>
            <person name="Pai G."/>
            <person name="Peterson J."/>
            <person name="Pham P.K."/>
            <person name="Rizzo M."/>
            <person name="Rooney T."/>
            <person name="Rowley D."/>
            <person name="Sakano H."/>
            <person name="Salzberg S.L."/>
            <person name="Schwartz J.R."/>
            <person name="Shinn P."/>
            <person name="Southwick A.M."/>
            <person name="Sun H."/>
            <person name="Tallon L.J."/>
            <person name="Tambunga G."/>
            <person name="Toriumi M.J."/>
            <person name="Town C.D."/>
            <person name="Utterback T."/>
            <person name="Van Aken S."/>
            <person name="Vaysberg M."/>
            <person name="Vysotskaia V.S."/>
            <person name="Walker M."/>
            <person name="Wu D."/>
            <person name="Yu G."/>
            <person name="Fraser C.M."/>
            <person name="Venter J.C."/>
            <person name="Davis R.W."/>
        </authorList>
    </citation>
    <scope>NUCLEOTIDE SEQUENCE [LARGE SCALE GENOMIC DNA]</scope>
    <source>
        <strain>cv. Columbia</strain>
    </source>
</reference>
<reference key="3">
    <citation type="journal article" date="2017" name="Plant J.">
        <title>Araport11: a complete reannotation of the Arabidopsis thaliana reference genome.</title>
        <authorList>
            <person name="Cheng C.Y."/>
            <person name="Krishnakumar V."/>
            <person name="Chan A.P."/>
            <person name="Thibaud-Nissen F."/>
            <person name="Schobel S."/>
            <person name="Town C.D."/>
        </authorList>
    </citation>
    <scope>GENOME REANNOTATION</scope>
    <source>
        <strain>cv. Columbia</strain>
    </source>
</reference>
<name>TLPH_ARATH</name>
<gene>
    <name type="ordered locus">At1g18250</name>
    <name type="ORF">T10O22.21</name>
</gene>
<dbReference type="EMBL" id="L34693">
    <property type="protein sequence ID" value="AAA32875.1"/>
    <property type="molecule type" value="mRNA"/>
</dbReference>
<dbReference type="EMBL" id="AC069551">
    <property type="protein sequence ID" value="AAF78382.1"/>
    <property type="status" value="ALT_SEQ"/>
    <property type="molecule type" value="Genomic_DNA"/>
</dbReference>
<dbReference type="EMBL" id="CP002684">
    <property type="protein sequence ID" value="AEE29690.1"/>
    <property type="molecule type" value="Genomic_DNA"/>
</dbReference>
<dbReference type="PIR" id="B86317">
    <property type="entry name" value="B86317"/>
</dbReference>
<dbReference type="PIR" id="S71175">
    <property type="entry name" value="S71175"/>
</dbReference>
<dbReference type="RefSeq" id="NP_173261.1">
    <molecule id="P50699-1"/>
    <property type="nucleotide sequence ID" value="NM_101683.2"/>
</dbReference>
<dbReference type="SMR" id="P50699"/>
<dbReference type="FunCoup" id="P50699">
    <property type="interactions" value="162"/>
</dbReference>
<dbReference type="STRING" id="3702.P50699"/>
<dbReference type="PaxDb" id="3702-AT1G18250.2"/>
<dbReference type="EnsemblPlants" id="AT1G18250.1">
    <molecule id="P50699-1"/>
    <property type="protein sequence ID" value="AT1G18250.1"/>
    <property type="gene ID" value="AT1G18250"/>
</dbReference>
<dbReference type="Gramene" id="AT1G18250.1">
    <molecule id="P50699-1"/>
    <property type="protein sequence ID" value="AT1G18250.1"/>
    <property type="gene ID" value="AT1G18250"/>
</dbReference>
<dbReference type="KEGG" id="ath:AT1G18250"/>
<dbReference type="Araport" id="AT1G18250"/>
<dbReference type="TAIR" id="AT1G18250">
    <property type="gene designation" value="ATLP-1"/>
</dbReference>
<dbReference type="eggNOG" id="ENOG502QQ9U">
    <property type="taxonomic scope" value="Eukaryota"/>
</dbReference>
<dbReference type="HOGENOM" id="CLU_043181_0_1_1"/>
<dbReference type="InParanoid" id="P50699"/>
<dbReference type="PhylomeDB" id="P50699"/>
<dbReference type="PRO" id="PR:P50699"/>
<dbReference type="Proteomes" id="UP000006548">
    <property type="component" value="Chromosome 1"/>
</dbReference>
<dbReference type="ExpressionAtlas" id="P50699">
    <property type="expression patterns" value="baseline and differential"/>
</dbReference>
<dbReference type="CDD" id="cd09218">
    <property type="entry name" value="TLP-PA"/>
    <property type="match status" value="1"/>
</dbReference>
<dbReference type="FunFam" id="2.60.110.10:FF:000002">
    <property type="entry name" value="Thaumatin-like protein 1a"/>
    <property type="match status" value="1"/>
</dbReference>
<dbReference type="Gene3D" id="2.60.110.10">
    <property type="entry name" value="Thaumatin"/>
    <property type="match status" value="1"/>
</dbReference>
<dbReference type="InterPro" id="IPR037176">
    <property type="entry name" value="Osmotin/thaumatin-like_sf"/>
</dbReference>
<dbReference type="InterPro" id="IPR001938">
    <property type="entry name" value="Thaumatin"/>
</dbReference>
<dbReference type="InterPro" id="IPR017949">
    <property type="entry name" value="Thaumatin_CS"/>
</dbReference>
<dbReference type="PANTHER" id="PTHR31048">
    <property type="entry name" value="OS03G0233200 PROTEIN"/>
    <property type="match status" value="1"/>
</dbReference>
<dbReference type="Pfam" id="PF00314">
    <property type="entry name" value="Thaumatin"/>
    <property type="match status" value="1"/>
</dbReference>
<dbReference type="PIRSF" id="PIRSF002703">
    <property type="entry name" value="Thaumatin"/>
    <property type="match status" value="1"/>
</dbReference>
<dbReference type="PRINTS" id="PR00347">
    <property type="entry name" value="THAUMATIN"/>
</dbReference>
<dbReference type="SMART" id="SM00205">
    <property type="entry name" value="THN"/>
    <property type="match status" value="1"/>
</dbReference>
<dbReference type="SUPFAM" id="SSF49870">
    <property type="entry name" value="Osmotin, thaumatin-like protein"/>
    <property type="match status" value="1"/>
</dbReference>
<dbReference type="PROSITE" id="PS00316">
    <property type="entry name" value="THAUMATIN_1"/>
    <property type="match status" value="1"/>
</dbReference>
<dbReference type="PROSITE" id="PS51367">
    <property type="entry name" value="THAUMATIN_2"/>
    <property type="match status" value="1"/>
</dbReference>
<proteinExistence type="evidence at transcript level"/>
<comment type="alternative products">
    <event type="alternative splicing"/>
    <isoform>
        <id>P50699-1</id>
        <name>1</name>
        <sequence type="displayed"/>
    </isoform>
    <text>A number of isoforms are produced. According to EST sequences.</text>
</comment>
<comment type="similarity">
    <text evidence="2">Belongs to the thaumatin family.</text>
</comment>
<comment type="sequence caution" evidence="3">
    <conflict type="erroneous gene model prediction">
        <sequence resource="EMBL-CDS" id="AAF78382"/>
    </conflict>
</comment>
<organism>
    <name type="scientific">Arabidopsis thaliana</name>
    <name type="common">Mouse-ear cress</name>
    <dbReference type="NCBI Taxonomy" id="3702"/>
    <lineage>
        <taxon>Eukaryota</taxon>
        <taxon>Viridiplantae</taxon>
        <taxon>Streptophyta</taxon>
        <taxon>Embryophyta</taxon>
        <taxon>Tracheophyta</taxon>
        <taxon>Spermatophyta</taxon>
        <taxon>Magnoliopsida</taxon>
        <taxon>eudicotyledons</taxon>
        <taxon>Gunneridae</taxon>
        <taxon>Pentapetalae</taxon>
        <taxon>rosids</taxon>
        <taxon>malvids</taxon>
        <taxon>Brassicales</taxon>
        <taxon>Brassicaceae</taxon>
        <taxon>Camelineae</taxon>
        <taxon>Arabidopsis</taxon>
    </lineage>
</organism>
<sequence>MASINLFLFAFLLLLSHASASTVIFYNKCKHPVWPGIQPSAGQNLLAGGGFKLPANKAHSLQLPPLWSGRFWGRHGCTFDRSGRGHCATGDCGGSLSCNGAGGEPPATLAEITLGPELDFYDVSLVDGYNLAMSIMPVKGSGQCSYAGCVSDLNQMCPVGLQVRSRNGKRVVACKSACSAFNSPQYCCTGLFGNPQSCKPTAYSKIFKVACPKAYSYAYDDPTSIATCSKANYIVTFCPHHRH</sequence>
<accession>P50699</accession>
<accession>Q9LM26</accession>
<evidence type="ECO:0000255" key="1"/>
<evidence type="ECO:0000255" key="2">
    <source>
        <dbReference type="PROSITE-ProRule" id="PRU00699"/>
    </source>
</evidence>
<evidence type="ECO:0000305" key="3"/>
<feature type="signal peptide" evidence="1">
    <location>
        <begin position="1"/>
        <end position="20"/>
    </location>
</feature>
<feature type="chain" id="PRO_0000034037" description="Thaumatin-like protein">
    <location>
        <begin position="21"/>
        <end position="243"/>
    </location>
</feature>
<feature type="disulfide bond" evidence="2">
    <location>
        <begin position="29"/>
        <end position="238"/>
    </location>
</feature>
<feature type="disulfide bond" evidence="2">
    <location>
        <begin position="77"/>
        <end position="87"/>
    </location>
</feature>
<feature type="disulfide bond" evidence="2">
    <location>
        <begin position="92"/>
        <end position="98"/>
    </location>
</feature>
<feature type="disulfide bond" evidence="2">
    <location>
        <begin position="144"/>
        <end position="228"/>
    </location>
</feature>
<feature type="disulfide bond" evidence="2">
    <location>
        <begin position="149"/>
        <end position="211"/>
    </location>
</feature>
<feature type="disulfide bond" evidence="2">
    <location>
        <begin position="157"/>
        <end position="174"/>
    </location>
</feature>
<feature type="disulfide bond" evidence="2">
    <location>
        <begin position="178"/>
        <end position="187"/>
    </location>
</feature>
<feature type="disulfide bond" evidence="2">
    <location>
        <begin position="188"/>
        <end position="198"/>
    </location>
</feature>
<feature type="sequence conflict" description="In Ref. 1; AAA32875." evidence="3" ref="1">
    <original>F</original>
    <variation>Y</variation>
    <location>
        <position position="9"/>
    </location>
</feature>
<feature type="sequence conflict" description="In Ref. 1; AAA32875." evidence="3" ref="1">
    <original>S</original>
    <variation>T</variation>
    <location>
        <position position="145"/>
    </location>
</feature>
<feature type="sequence conflict" description="In Ref. 1; AAA32875." evidence="3" ref="1">
    <original>D</original>
    <variation>E</variation>
    <location>
        <position position="221"/>
    </location>
</feature>
<keyword id="KW-0025">Alternative splicing</keyword>
<keyword id="KW-1015">Disulfide bond</keyword>
<keyword id="KW-1185">Reference proteome</keyword>
<keyword id="KW-0732">Signal</keyword>
<protein>
    <recommendedName>
        <fullName>Thaumatin-like protein</fullName>
    </recommendedName>
</protein>